<evidence type="ECO:0000255" key="1">
    <source>
        <dbReference type="HAMAP-Rule" id="MF_00233"/>
    </source>
</evidence>
<name>LOLB_PSYIN</name>
<sequence length="203" mass="23273">MKTFLPCLFFLLILVGCAQRPTPPATKTADWAAHQQQLNDLTDWSLRGKIAIITPENRHSLNIYWQQSGDNFHITLTSFLGSTILDVKKTALSTRIIDDQGKIYFGKNTQTLMTRLSGIELPVEVLQQWIKGNPIGAVYQLNENNQLVSLTGQDNKNENWSANYQDYKTVQEISLPHQLKLTRQDLLIKFAIQKWLLEKTEIF</sequence>
<comment type="function">
    <text evidence="1">Plays a critical role in the incorporation of lipoproteins in the outer membrane after they are released by the LolA protein.</text>
</comment>
<comment type="subunit">
    <text evidence="1">Monomer.</text>
</comment>
<comment type="subcellular location">
    <subcellularLocation>
        <location evidence="1">Cell outer membrane</location>
        <topology evidence="1">Lipid-anchor</topology>
    </subcellularLocation>
</comment>
<comment type="similarity">
    <text evidence="1">Belongs to the LolB family.</text>
</comment>
<organism>
    <name type="scientific">Psychromonas ingrahamii (strain DSM 17664 / CCUG 51855 / 37)</name>
    <dbReference type="NCBI Taxonomy" id="357804"/>
    <lineage>
        <taxon>Bacteria</taxon>
        <taxon>Pseudomonadati</taxon>
        <taxon>Pseudomonadota</taxon>
        <taxon>Gammaproteobacteria</taxon>
        <taxon>Alteromonadales</taxon>
        <taxon>Psychromonadaceae</taxon>
        <taxon>Psychromonas</taxon>
    </lineage>
</organism>
<keyword id="KW-0998">Cell outer membrane</keyword>
<keyword id="KW-0143">Chaperone</keyword>
<keyword id="KW-0449">Lipoprotein</keyword>
<keyword id="KW-0472">Membrane</keyword>
<keyword id="KW-0564">Palmitate</keyword>
<keyword id="KW-0653">Protein transport</keyword>
<keyword id="KW-1185">Reference proteome</keyword>
<keyword id="KW-0732">Signal</keyword>
<keyword id="KW-0813">Transport</keyword>
<reference key="1">
    <citation type="journal article" date="2008" name="BMC Genomics">
        <title>Genomics of an extreme psychrophile, Psychromonas ingrahamii.</title>
        <authorList>
            <person name="Riley M."/>
            <person name="Staley J.T."/>
            <person name="Danchin A."/>
            <person name="Wang T.Z."/>
            <person name="Brettin T.S."/>
            <person name="Hauser L.J."/>
            <person name="Land M.L."/>
            <person name="Thompson L.S."/>
        </authorList>
    </citation>
    <scope>NUCLEOTIDE SEQUENCE [LARGE SCALE GENOMIC DNA]</scope>
    <source>
        <strain>DSM 17664 / CCUG 51855 / 37</strain>
    </source>
</reference>
<protein>
    <recommendedName>
        <fullName evidence="1">Outer-membrane lipoprotein LolB</fullName>
    </recommendedName>
</protein>
<proteinExistence type="inferred from homology"/>
<gene>
    <name evidence="1" type="primary">lolB</name>
    <name type="ordered locus">Ping_0913</name>
</gene>
<dbReference type="EMBL" id="CP000510">
    <property type="protein sequence ID" value="ABM02755.1"/>
    <property type="molecule type" value="Genomic_DNA"/>
</dbReference>
<dbReference type="RefSeq" id="WP_011769318.1">
    <property type="nucleotide sequence ID" value="NC_008709.1"/>
</dbReference>
<dbReference type="SMR" id="A1STE0"/>
<dbReference type="STRING" id="357804.Ping_0913"/>
<dbReference type="KEGG" id="pin:Ping_0913"/>
<dbReference type="eggNOG" id="COG3017">
    <property type="taxonomic scope" value="Bacteria"/>
</dbReference>
<dbReference type="HOGENOM" id="CLU_092816_1_0_6"/>
<dbReference type="OrthoDB" id="9797618at2"/>
<dbReference type="Proteomes" id="UP000000639">
    <property type="component" value="Chromosome"/>
</dbReference>
<dbReference type="GO" id="GO:0009279">
    <property type="term" value="C:cell outer membrane"/>
    <property type="evidence" value="ECO:0007669"/>
    <property type="project" value="UniProtKB-SubCell"/>
</dbReference>
<dbReference type="GO" id="GO:0044874">
    <property type="term" value="P:lipoprotein localization to outer membrane"/>
    <property type="evidence" value="ECO:0007669"/>
    <property type="project" value="UniProtKB-UniRule"/>
</dbReference>
<dbReference type="GO" id="GO:0015031">
    <property type="term" value="P:protein transport"/>
    <property type="evidence" value="ECO:0007669"/>
    <property type="project" value="UniProtKB-KW"/>
</dbReference>
<dbReference type="CDD" id="cd16326">
    <property type="entry name" value="LolB"/>
    <property type="match status" value="1"/>
</dbReference>
<dbReference type="Gene3D" id="2.50.20.10">
    <property type="entry name" value="Lipoprotein localisation LolA/LolB/LppX"/>
    <property type="match status" value="1"/>
</dbReference>
<dbReference type="HAMAP" id="MF_00233">
    <property type="entry name" value="LolB"/>
    <property type="match status" value="1"/>
</dbReference>
<dbReference type="InterPro" id="IPR029046">
    <property type="entry name" value="LolA/LolB/LppX"/>
</dbReference>
<dbReference type="InterPro" id="IPR004565">
    <property type="entry name" value="OM_lipoprot_LolB"/>
</dbReference>
<dbReference type="NCBIfam" id="TIGR00548">
    <property type="entry name" value="lolB"/>
    <property type="match status" value="1"/>
</dbReference>
<dbReference type="Pfam" id="PF03550">
    <property type="entry name" value="LolB"/>
    <property type="match status" value="1"/>
</dbReference>
<dbReference type="SUPFAM" id="SSF89392">
    <property type="entry name" value="Prokaryotic lipoproteins and lipoprotein localization factors"/>
    <property type="match status" value="1"/>
</dbReference>
<dbReference type="PROSITE" id="PS51257">
    <property type="entry name" value="PROKAR_LIPOPROTEIN"/>
    <property type="match status" value="1"/>
</dbReference>
<accession>A1STE0</accession>
<feature type="signal peptide" evidence="1">
    <location>
        <begin position="1"/>
        <end position="16"/>
    </location>
</feature>
<feature type="chain" id="PRO_0000336616" description="Outer-membrane lipoprotein LolB">
    <location>
        <begin position="17"/>
        <end position="203"/>
    </location>
</feature>
<feature type="lipid moiety-binding region" description="N-palmitoyl cysteine" evidence="1">
    <location>
        <position position="17"/>
    </location>
</feature>
<feature type="lipid moiety-binding region" description="S-diacylglycerol cysteine" evidence="1">
    <location>
        <position position="17"/>
    </location>
</feature>